<organism>
    <name type="scientific">Edwardsiella ictaluri (strain 93-146)</name>
    <dbReference type="NCBI Taxonomy" id="634503"/>
    <lineage>
        <taxon>Bacteria</taxon>
        <taxon>Pseudomonadati</taxon>
        <taxon>Pseudomonadota</taxon>
        <taxon>Gammaproteobacteria</taxon>
        <taxon>Enterobacterales</taxon>
        <taxon>Hafniaceae</taxon>
        <taxon>Edwardsiella</taxon>
    </lineage>
</organism>
<dbReference type="EMBL" id="CP001600">
    <property type="protein sequence ID" value="ACR70715.1"/>
    <property type="molecule type" value="Genomic_DNA"/>
</dbReference>
<dbReference type="RefSeq" id="WP_005290387.1">
    <property type="nucleotide sequence ID" value="NZ_CP169062.1"/>
</dbReference>
<dbReference type="SMR" id="C5BGL8"/>
<dbReference type="STRING" id="67780.B6E78_09535"/>
<dbReference type="GeneID" id="93122110"/>
<dbReference type="KEGG" id="eic:NT01EI_3587"/>
<dbReference type="HOGENOM" id="CLU_078858_2_1_6"/>
<dbReference type="OrthoDB" id="9802589at2"/>
<dbReference type="Proteomes" id="UP000001485">
    <property type="component" value="Chromosome"/>
</dbReference>
<dbReference type="GO" id="GO:0022625">
    <property type="term" value="C:cytosolic large ribosomal subunit"/>
    <property type="evidence" value="ECO:0007669"/>
    <property type="project" value="TreeGrafter"/>
</dbReference>
<dbReference type="GO" id="GO:0019843">
    <property type="term" value="F:rRNA binding"/>
    <property type="evidence" value="ECO:0007669"/>
    <property type="project" value="UniProtKB-UniRule"/>
</dbReference>
<dbReference type="GO" id="GO:0003735">
    <property type="term" value="F:structural constituent of ribosome"/>
    <property type="evidence" value="ECO:0007669"/>
    <property type="project" value="InterPro"/>
</dbReference>
<dbReference type="GO" id="GO:0000049">
    <property type="term" value="F:tRNA binding"/>
    <property type="evidence" value="ECO:0007669"/>
    <property type="project" value="UniProtKB-KW"/>
</dbReference>
<dbReference type="GO" id="GO:0006412">
    <property type="term" value="P:translation"/>
    <property type="evidence" value="ECO:0007669"/>
    <property type="project" value="UniProtKB-UniRule"/>
</dbReference>
<dbReference type="CDD" id="cd01433">
    <property type="entry name" value="Ribosomal_L16_L10e"/>
    <property type="match status" value="1"/>
</dbReference>
<dbReference type="FunFam" id="3.90.1170.10:FF:000001">
    <property type="entry name" value="50S ribosomal protein L16"/>
    <property type="match status" value="1"/>
</dbReference>
<dbReference type="Gene3D" id="3.90.1170.10">
    <property type="entry name" value="Ribosomal protein L10e/L16"/>
    <property type="match status" value="1"/>
</dbReference>
<dbReference type="HAMAP" id="MF_01342">
    <property type="entry name" value="Ribosomal_uL16"/>
    <property type="match status" value="1"/>
</dbReference>
<dbReference type="InterPro" id="IPR047873">
    <property type="entry name" value="Ribosomal_uL16"/>
</dbReference>
<dbReference type="InterPro" id="IPR000114">
    <property type="entry name" value="Ribosomal_uL16_bact-type"/>
</dbReference>
<dbReference type="InterPro" id="IPR020798">
    <property type="entry name" value="Ribosomal_uL16_CS"/>
</dbReference>
<dbReference type="InterPro" id="IPR016180">
    <property type="entry name" value="Ribosomal_uL16_dom"/>
</dbReference>
<dbReference type="InterPro" id="IPR036920">
    <property type="entry name" value="Ribosomal_uL16_sf"/>
</dbReference>
<dbReference type="NCBIfam" id="TIGR01164">
    <property type="entry name" value="rplP_bact"/>
    <property type="match status" value="1"/>
</dbReference>
<dbReference type="PANTHER" id="PTHR12220">
    <property type="entry name" value="50S/60S RIBOSOMAL PROTEIN L16"/>
    <property type="match status" value="1"/>
</dbReference>
<dbReference type="PANTHER" id="PTHR12220:SF13">
    <property type="entry name" value="LARGE RIBOSOMAL SUBUNIT PROTEIN UL16M"/>
    <property type="match status" value="1"/>
</dbReference>
<dbReference type="Pfam" id="PF00252">
    <property type="entry name" value="Ribosomal_L16"/>
    <property type="match status" value="1"/>
</dbReference>
<dbReference type="PRINTS" id="PR00060">
    <property type="entry name" value="RIBOSOMALL16"/>
</dbReference>
<dbReference type="SUPFAM" id="SSF54686">
    <property type="entry name" value="Ribosomal protein L16p/L10e"/>
    <property type="match status" value="1"/>
</dbReference>
<dbReference type="PROSITE" id="PS00586">
    <property type="entry name" value="RIBOSOMAL_L16_1"/>
    <property type="match status" value="1"/>
</dbReference>
<dbReference type="PROSITE" id="PS00701">
    <property type="entry name" value="RIBOSOMAL_L16_2"/>
    <property type="match status" value="1"/>
</dbReference>
<accession>C5BGL8</accession>
<evidence type="ECO:0000255" key="1">
    <source>
        <dbReference type="HAMAP-Rule" id="MF_01342"/>
    </source>
</evidence>
<evidence type="ECO:0000305" key="2"/>
<comment type="function">
    <text evidence="1">Binds 23S rRNA and is also seen to make contacts with the A and possibly P site tRNAs.</text>
</comment>
<comment type="subunit">
    <text evidence="1">Part of the 50S ribosomal subunit.</text>
</comment>
<comment type="similarity">
    <text evidence="1">Belongs to the universal ribosomal protein uL16 family.</text>
</comment>
<reference key="1">
    <citation type="submission" date="2009-03" db="EMBL/GenBank/DDBJ databases">
        <title>Complete genome sequence of Edwardsiella ictaluri 93-146.</title>
        <authorList>
            <person name="Williams M.L."/>
            <person name="Gillaspy A.F."/>
            <person name="Dyer D.W."/>
            <person name="Thune R.L."/>
            <person name="Waldbieser G.C."/>
            <person name="Schuster S.C."/>
            <person name="Gipson J."/>
            <person name="Zaitshik J."/>
            <person name="Landry C."/>
            <person name="Lawrence M.L."/>
        </authorList>
    </citation>
    <scope>NUCLEOTIDE SEQUENCE [LARGE SCALE GENOMIC DNA]</scope>
    <source>
        <strain>93-146</strain>
    </source>
</reference>
<proteinExistence type="inferred from homology"/>
<protein>
    <recommendedName>
        <fullName evidence="1">Large ribosomal subunit protein uL16</fullName>
    </recommendedName>
    <alternativeName>
        <fullName evidence="2">50S ribosomal protein L16</fullName>
    </alternativeName>
</protein>
<name>RL16_EDWI9</name>
<gene>
    <name evidence="1" type="primary">rplP</name>
    <name type="ordered locus">NT01EI_3587</name>
</gene>
<sequence>MLQPKRTKFRKVHKGRNRGLAQGTDVSFGTFGLKAVGRGRLTARQIEAARRAMTRAVKRQGKIWIRVFPDKPITEKPLAVRMGKGKGNVEYWVALIQPGKVLYEMDGVPEELAREAFKLAAAKLPIKTTFVTKTVM</sequence>
<feature type="chain" id="PRO_1000214729" description="Large ribosomal subunit protein uL16">
    <location>
        <begin position="1"/>
        <end position="136"/>
    </location>
</feature>
<keyword id="KW-0687">Ribonucleoprotein</keyword>
<keyword id="KW-0689">Ribosomal protein</keyword>
<keyword id="KW-0694">RNA-binding</keyword>
<keyword id="KW-0699">rRNA-binding</keyword>
<keyword id="KW-0820">tRNA-binding</keyword>